<comment type="function">
    <text evidence="1">Murein-degrading enzyme. May play a role in recycling of muropeptides during cell elongation and/or cell division.</text>
</comment>
<comment type="catalytic activity">
    <reaction evidence="1">
        <text>Exolytic cleavage of the (1-&gt;4)-beta-glycosidic linkage between N-acetylmuramic acid (MurNAc) and N-acetylglucosamine (GlcNAc) residues in peptidoglycan, from either the reducing or the non-reducing ends of the peptidoglycan chains, with concomitant formation of a 1,6-anhydrobond in the MurNAc residue.</text>
        <dbReference type="EC" id="4.2.2.n1"/>
    </reaction>
</comment>
<comment type="subcellular location">
    <subcellularLocation>
        <location evidence="1">Cell outer membrane</location>
        <topology evidence="1">Lipid-anchor</topology>
    </subcellularLocation>
</comment>
<comment type="similarity">
    <text evidence="1">Belongs to the transglycosylase Slt family.</text>
</comment>
<comment type="sequence caution" evidence="2">
    <conflict type="erroneous initiation">
        <sequence resource="EMBL-CDS" id="ABR78792"/>
    </conflict>
</comment>
<feature type="signal peptide" evidence="1">
    <location>
        <begin position="1"/>
        <end position="16"/>
    </location>
</feature>
<feature type="chain" id="PRO_0000335584" description="Membrane-bound lytic murein transglycosylase C">
    <location>
        <begin position="17"/>
        <end position="360"/>
    </location>
</feature>
<feature type="lipid moiety-binding region" description="N-palmitoyl cysteine" evidence="1">
    <location>
        <position position="17"/>
    </location>
</feature>
<feature type="lipid moiety-binding region" description="S-diacylglycerol cysteine" evidence="1">
    <location>
        <position position="17"/>
    </location>
</feature>
<evidence type="ECO:0000255" key="1">
    <source>
        <dbReference type="HAMAP-Rule" id="MF_01616"/>
    </source>
</evidence>
<evidence type="ECO:0000305" key="2"/>
<organism>
    <name type="scientific">Klebsiella pneumoniae subsp. pneumoniae (strain ATCC 700721 / MGH 78578)</name>
    <dbReference type="NCBI Taxonomy" id="272620"/>
    <lineage>
        <taxon>Bacteria</taxon>
        <taxon>Pseudomonadati</taxon>
        <taxon>Pseudomonadota</taxon>
        <taxon>Gammaproteobacteria</taxon>
        <taxon>Enterobacterales</taxon>
        <taxon>Enterobacteriaceae</taxon>
        <taxon>Klebsiella/Raoultella group</taxon>
        <taxon>Klebsiella</taxon>
        <taxon>Klebsiella pneumoniae complex</taxon>
    </lineage>
</organism>
<name>MLTC_KLEP7</name>
<reference key="1">
    <citation type="submission" date="2006-09" db="EMBL/GenBank/DDBJ databases">
        <authorList>
            <consortium name="The Klebsiella pneumonia Genome Sequencing Project"/>
            <person name="McClelland M."/>
            <person name="Sanderson E.K."/>
            <person name="Spieth J."/>
            <person name="Clifton W.S."/>
            <person name="Latreille P."/>
            <person name="Sabo A."/>
            <person name="Pepin K."/>
            <person name="Bhonagiri V."/>
            <person name="Porwollik S."/>
            <person name="Ali J."/>
            <person name="Wilson R.K."/>
        </authorList>
    </citation>
    <scope>NUCLEOTIDE SEQUENCE [LARGE SCALE GENOMIC DNA]</scope>
    <source>
        <strain>ATCC 700721 / MGH 78578</strain>
    </source>
</reference>
<proteinExistence type="inferred from homology"/>
<accession>A6TDX1</accession>
<sequence>MKKYLALALIAPLLVSCSSSNKKGAEYNEAWVKDTNGFDILMGQFAHNIENIWGYNEVLLAGPKDYVKYTDQYQTRSHINFDEGTITVETIAGTDPRGRLRQAIVKTLLMGDDPNSIDLYSDVDDIQISKEPFLYGQVVDNTGASIRWEWRAARFADYLLQTRLKSRNNGLRVVYSITINLVPNHLDKRAHKYLGMVRQASRKYGVDESLILAIMQTESSFNPYAVSHADAMGLMQVVQHSAGRDVFRSQGKSGLPSRSYLFDPANNIDTGTAYLAMLNNVYLAGIDNPTSRRYAVITAYNGGAGSVLRVFSSDKVQAANIINSMAPGDVYQTLTTRHPSAESRRYLYKVNTAQKSYRRK</sequence>
<keyword id="KW-0998">Cell outer membrane</keyword>
<keyword id="KW-0961">Cell wall biogenesis/degradation</keyword>
<keyword id="KW-0449">Lipoprotein</keyword>
<keyword id="KW-0456">Lyase</keyword>
<keyword id="KW-0472">Membrane</keyword>
<keyword id="KW-0564">Palmitate</keyword>
<keyword id="KW-0732">Signal</keyword>
<dbReference type="EC" id="4.2.2.n1" evidence="1"/>
<dbReference type="EMBL" id="CP000647">
    <property type="protein sequence ID" value="ABR78792.1"/>
    <property type="status" value="ALT_INIT"/>
    <property type="molecule type" value="Genomic_DNA"/>
</dbReference>
<dbReference type="SMR" id="A6TDX1"/>
<dbReference type="STRING" id="272620.KPN_03395"/>
<dbReference type="CAZy" id="GH23">
    <property type="family name" value="Glycoside Hydrolase Family 23"/>
</dbReference>
<dbReference type="PaxDb" id="272620-KPN_03395"/>
<dbReference type="DNASU" id="5339746"/>
<dbReference type="EnsemblBacteria" id="ABR78792">
    <property type="protein sequence ID" value="ABR78792"/>
    <property type="gene ID" value="KPN_03395"/>
</dbReference>
<dbReference type="KEGG" id="kpn:KPN_03395"/>
<dbReference type="HOGENOM" id="CLU_044583_0_0_6"/>
<dbReference type="Proteomes" id="UP000000265">
    <property type="component" value="Chromosome"/>
</dbReference>
<dbReference type="GO" id="GO:0009279">
    <property type="term" value="C:cell outer membrane"/>
    <property type="evidence" value="ECO:0007669"/>
    <property type="project" value="UniProtKB-SubCell"/>
</dbReference>
<dbReference type="GO" id="GO:0016798">
    <property type="term" value="F:hydrolase activity, acting on glycosyl bonds"/>
    <property type="evidence" value="ECO:0007669"/>
    <property type="project" value="InterPro"/>
</dbReference>
<dbReference type="GO" id="GO:0008933">
    <property type="term" value="F:peptidoglycan lytic transglycosylase activity"/>
    <property type="evidence" value="ECO:0007669"/>
    <property type="project" value="UniProtKB-UniRule"/>
</dbReference>
<dbReference type="GO" id="GO:0016998">
    <property type="term" value="P:cell wall macromolecule catabolic process"/>
    <property type="evidence" value="ECO:0007669"/>
    <property type="project" value="UniProtKB-UniRule"/>
</dbReference>
<dbReference type="GO" id="GO:0071555">
    <property type="term" value="P:cell wall organization"/>
    <property type="evidence" value="ECO:0007669"/>
    <property type="project" value="UniProtKB-KW"/>
</dbReference>
<dbReference type="GO" id="GO:0000270">
    <property type="term" value="P:peptidoglycan metabolic process"/>
    <property type="evidence" value="ECO:0007669"/>
    <property type="project" value="InterPro"/>
</dbReference>
<dbReference type="CDD" id="cd16893">
    <property type="entry name" value="LT_MltC_MltE"/>
    <property type="match status" value="1"/>
</dbReference>
<dbReference type="FunFam" id="1.10.530.10:FF:000002">
    <property type="entry name" value="Membrane-bound lytic murein transglycosylase C"/>
    <property type="match status" value="1"/>
</dbReference>
<dbReference type="Gene3D" id="1.10.530.10">
    <property type="match status" value="1"/>
</dbReference>
<dbReference type="HAMAP" id="MF_01616">
    <property type="entry name" value="MltC"/>
    <property type="match status" value="1"/>
</dbReference>
<dbReference type="InterPro" id="IPR023346">
    <property type="entry name" value="Lysozyme-like_dom_sf"/>
</dbReference>
<dbReference type="InterPro" id="IPR023664">
    <property type="entry name" value="Murein_transglycosylaseC"/>
</dbReference>
<dbReference type="InterPro" id="IPR024570">
    <property type="entry name" value="Murein_transglycosylaseC_N"/>
</dbReference>
<dbReference type="InterPro" id="IPR000189">
    <property type="entry name" value="Transglyc_AS"/>
</dbReference>
<dbReference type="InterPro" id="IPR008258">
    <property type="entry name" value="Transglycosylase_SLT_dom_1"/>
</dbReference>
<dbReference type="NCBIfam" id="NF008670">
    <property type="entry name" value="PRK11671.1"/>
    <property type="match status" value="1"/>
</dbReference>
<dbReference type="PANTHER" id="PTHR37423:SF2">
    <property type="entry name" value="MEMBRANE-BOUND LYTIC MUREIN TRANSGLYCOSYLASE C"/>
    <property type="match status" value="1"/>
</dbReference>
<dbReference type="PANTHER" id="PTHR37423">
    <property type="entry name" value="SOLUBLE LYTIC MUREIN TRANSGLYCOSYLASE-RELATED"/>
    <property type="match status" value="1"/>
</dbReference>
<dbReference type="Pfam" id="PF11873">
    <property type="entry name" value="Mltc_N"/>
    <property type="match status" value="1"/>
</dbReference>
<dbReference type="Pfam" id="PF01464">
    <property type="entry name" value="SLT"/>
    <property type="match status" value="1"/>
</dbReference>
<dbReference type="SUPFAM" id="SSF53955">
    <property type="entry name" value="Lysozyme-like"/>
    <property type="match status" value="1"/>
</dbReference>
<dbReference type="PROSITE" id="PS51257">
    <property type="entry name" value="PROKAR_LIPOPROTEIN"/>
    <property type="match status" value="1"/>
</dbReference>
<dbReference type="PROSITE" id="PS00922">
    <property type="entry name" value="TRANSGLYCOSYLASE"/>
    <property type="match status" value="1"/>
</dbReference>
<gene>
    <name evidence="1" type="primary">mltC</name>
    <name type="ordered locus">KPN78578_33310</name>
    <name type="ORF">KPN_03395</name>
</gene>
<protein>
    <recommendedName>
        <fullName evidence="1">Membrane-bound lytic murein transglycosylase C</fullName>
        <ecNumber evidence="1">4.2.2.n1</ecNumber>
    </recommendedName>
    <alternativeName>
        <fullName evidence="1">Murein lyase C</fullName>
    </alternativeName>
</protein>